<feature type="chain" id="PRO_0000277663" description="Mitochondrial ubiquitin ligase activator of nfkb 1-A">
    <location>
        <begin position="1"/>
        <end position="341"/>
    </location>
</feature>
<feature type="topological domain" description="Cytoplasmic" evidence="2">
    <location>
        <begin position="1"/>
        <end position="5"/>
    </location>
</feature>
<feature type="transmembrane region" description="Helical" evidence="2">
    <location>
        <begin position="6"/>
        <end position="26"/>
    </location>
</feature>
<feature type="topological domain" description="Mitochondrial intermembrane" evidence="2">
    <location>
        <begin position="27"/>
        <end position="233"/>
    </location>
</feature>
<feature type="transmembrane region" description="Helical" evidence="2">
    <location>
        <begin position="234"/>
        <end position="254"/>
    </location>
</feature>
<feature type="topological domain" description="Cytoplasmic" evidence="2">
    <location>
        <begin position="255"/>
        <end position="341"/>
    </location>
</feature>
<feature type="zinc finger region" description="RING-type" evidence="3">
    <location>
        <begin position="292"/>
        <end position="329"/>
    </location>
</feature>
<proteinExistence type="evidence at transcript level"/>
<reference key="1">
    <citation type="submission" date="2004-12" db="EMBL/GenBank/DDBJ databases">
        <authorList>
            <consortium name="NIH - Zebrafish Gene Collection (ZGC) project"/>
        </authorList>
    </citation>
    <scope>NUCLEOTIDE SEQUENCE [LARGE SCALE MRNA]</scope>
</reference>
<accession>Q5M7X9</accession>
<organism>
    <name type="scientific">Danio rerio</name>
    <name type="common">Zebrafish</name>
    <name type="synonym">Brachydanio rerio</name>
    <dbReference type="NCBI Taxonomy" id="7955"/>
    <lineage>
        <taxon>Eukaryota</taxon>
        <taxon>Metazoa</taxon>
        <taxon>Chordata</taxon>
        <taxon>Craniata</taxon>
        <taxon>Vertebrata</taxon>
        <taxon>Euteleostomi</taxon>
        <taxon>Actinopterygii</taxon>
        <taxon>Neopterygii</taxon>
        <taxon>Teleostei</taxon>
        <taxon>Ostariophysi</taxon>
        <taxon>Cypriniformes</taxon>
        <taxon>Danionidae</taxon>
        <taxon>Danioninae</taxon>
        <taxon>Danio</taxon>
    </lineage>
</organism>
<comment type="function">
    <text evidence="1">E3 ubiquitin-protein ligase that plays a role in the control of mitochondrial morphology. Promotes mitochondrial fragmentation and influences mitochondrial localization. Inhibits cell growth. E3 ubiquitin ligases accept ubiquitin from an E2 ubiquitin-conjugating enzyme in the form of a thioester and then directly transfer the ubiquitin to targeted substrates.</text>
</comment>
<comment type="catalytic activity">
    <reaction evidence="1">
        <text>S-ubiquitinyl-[E2 ubiquitin-conjugating enzyme]-L-cysteine + [acceptor protein]-L-lysine = [E2 ubiquitin-conjugating enzyme]-L-cysteine + N(6)-ubiquitinyl-[acceptor protein]-L-lysine.</text>
        <dbReference type="EC" id="2.3.2.27"/>
    </reaction>
</comment>
<comment type="pathway">
    <text evidence="1">Protein modification; protein ubiquitination.</text>
</comment>
<comment type="subunit">
    <text evidence="1">Homooligomer.</text>
</comment>
<comment type="subcellular location">
    <subcellularLocation>
        <location evidence="1">Mitochondrion outer membrane</location>
        <topology evidence="2">Multi-pass membrane protein</topology>
    </subcellularLocation>
</comment>
<comment type="domain">
    <text evidence="1">The zinc finger domain is required for E3 ligase activity.</text>
</comment>
<dbReference type="EC" id="2.3.2.27"/>
<dbReference type="EMBL" id="BC088385">
    <property type="protein sequence ID" value="AAH88385.1"/>
    <property type="molecule type" value="mRNA"/>
</dbReference>
<dbReference type="RefSeq" id="NP_001018134.1">
    <property type="nucleotide sequence ID" value="NM_001018124.1"/>
</dbReference>
<dbReference type="SMR" id="Q5M7X9"/>
<dbReference type="FunCoup" id="Q5M7X9">
    <property type="interactions" value="149"/>
</dbReference>
<dbReference type="STRING" id="7955.ENSDARP00000018598"/>
<dbReference type="PaxDb" id="7955-ENSDARP00000018598"/>
<dbReference type="Ensembl" id="ENSDART00000018818">
    <property type="protein sequence ID" value="ENSDARP00000018598"/>
    <property type="gene ID" value="ENSDARG00000021398"/>
</dbReference>
<dbReference type="GeneID" id="553180"/>
<dbReference type="KEGG" id="dre:553180"/>
<dbReference type="AGR" id="ZFIN:ZDB-GENE-050102-5"/>
<dbReference type="CTD" id="553180"/>
<dbReference type="ZFIN" id="ZDB-GENE-050102-5">
    <property type="gene designation" value="mul2"/>
</dbReference>
<dbReference type="eggNOG" id="KOG1571">
    <property type="taxonomic scope" value="Eukaryota"/>
</dbReference>
<dbReference type="HOGENOM" id="CLU_050604_1_0_1"/>
<dbReference type="InParanoid" id="Q5M7X9"/>
<dbReference type="OMA" id="FWWKVLA"/>
<dbReference type="OrthoDB" id="1711136at2759"/>
<dbReference type="PhylomeDB" id="Q5M7X9"/>
<dbReference type="TreeFam" id="TF325195"/>
<dbReference type="UniPathway" id="UPA00143"/>
<dbReference type="PRO" id="PR:Q5M7X9"/>
<dbReference type="Proteomes" id="UP000000437">
    <property type="component" value="Chromosome 2"/>
</dbReference>
<dbReference type="Bgee" id="ENSDARG00000021398">
    <property type="expression patterns" value="Expressed in muscle tissue and 20 other cell types or tissues"/>
</dbReference>
<dbReference type="GO" id="GO:0005741">
    <property type="term" value="C:mitochondrial outer membrane"/>
    <property type="evidence" value="ECO:0000250"/>
    <property type="project" value="UniProtKB"/>
</dbReference>
<dbReference type="GO" id="GO:0005777">
    <property type="term" value="C:peroxisome"/>
    <property type="evidence" value="ECO:0000250"/>
    <property type="project" value="UniProtKB"/>
</dbReference>
<dbReference type="GO" id="GO:0042802">
    <property type="term" value="F:identical protein binding"/>
    <property type="evidence" value="ECO:0000250"/>
    <property type="project" value="UniProtKB"/>
</dbReference>
<dbReference type="GO" id="GO:0061630">
    <property type="term" value="F:ubiquitin protein ligase activity"/>
    <property type="evidence" value="ECO:0000250"/>
    <property type="project" value="UniProtKB"/>
</dbReference>
<dbReference type="GO" id="GO:0004842">
    <property type="term" value="F:ubiquitin-protein transferase activity"/>
    <property type="evidence" value="ECO:0000318"/>
    <property type="project" value="GO_Central"/>
</dbReference>
<dbReference type="GO" id="GO:0008270">
    <property type="term" value="F:zinc ion binding"/>
    <property type="evidence" value="ECO:0007669"/>
    <property type="project" value="UniProtKB-KW"/>
</dbReference>
<dbReference type="GO" id="GO:0000266">
    <property type="term" value="P:mitochondrial fission"/>
    <property type="evidence" value="ECO:0000250"/>
    <property type="project" value="UniProtKB"/>
</dbReference>
<dbReference type="GO" id="GO:0051646">
    <property type="term" value="P:mitochondrion localization"/>
    <property type="evidence" value="ECO:0000250"/>
    <property type="project" value="UniProtKB"/>
</dbReference>
<dbReference type="GO" id="GO:0043123">
    <property type="term" value="P:positive regulation of canonical NF-kappaB signal transduction"/>
    <property type="evidence" value="ECO:0000250"/>
    <property type="project" value="UniProtKB"/>
</dbReference>
<dbReference type="GO" id="GO:0016567">
    <property type="term" value="P:protein ubiquitination"/>
    <property type="evidence" value="ECO:0000250"/>
    <property type="project" value="UniProtKB"/>
</dbReference>
<dbReference type="CDD" id="cd16648">
    <property type="entry name" value="mRING-HC-C3HC5_MAPL"/>
    <property type="match status" value="1"/>
</dbReference>
<dbReference type="FunFam" id="3.30.40.10:FF:000351">
    <property type="entry name" value="Mitochondrial ubiquitin ligase activator of NFKB 1"/>
    <property type="match status" value="1"/>
</dbReference>
<dbReference type="Gene3D" id="3.30.40.10">
    <property type="entry name" value="Zinc/RING finger domain, C3HC4 (zinc finger)"/>
    <property type="match status" value="1"/>
</dbReference>
<dbReference type="InterPro" id="IPR051652">
    <property type="entry name" value="MDM2_MDM4_MUL1"/>
</dbReference>
<dbReference type="InterPro" id="IPR022170">
    <property type="entry name" value="MUL1-like"/>
</dbReference>
<dbReference type="InterPro" id="IPR001841">
    <property type="entry name" value="Znf_RING"/>
</dbReference>
<dbReference type="InterPro" id="IPR013083">
    <property type="entry name" value="Znf_RING/FYVE/PHD"/>
</dbReference>
<dbReference type="PANTHER" id="PTHR12183">
    <property type="entry name" value="MITOCHONDRIAL UBIQUITIN LIGASE ACTIVATOR OF NFKB 1"/>
    <property type="match status" value="1"/>
</dbReference>
<dbReference type="PANTHER" id="PTHR12183:SF6">
    <property type="entry name" value="RING-TYPE E3 UBIQUITIN TRANSFERASE"/>
    <property type="match status" value="1"/>
</dbReference>
<dbReference type="Pfam" id="PF12483">
    <property type="entry name" value="GIDE"/>
    <property type="match status" value="1"/>
</dbReference>
<dbReference type="Pfam" id="PF13920">
    <property type="entry name" value="zf-C3HC4_3"/>
    <property type="match status" value="1"/>
</dbReference>
<dbReference type="SUPFAM" id="SSF57850">
    <property type="entry name" value="RING/U-box"/>
    <property type="match status" value="1"/>
</dbReference>
<dbReference type="PROSITE" id="PS50089">
    <property type="entry name" value="ZF_RING_2"/>
    <property type="match status" value="1"/>
</dbReference>
<keyword id="KW-0472">Membrane</keyword>
<keyword id="KW-0479">Metal-binding</keyword>
<keyword id="KW-0496">Mitochondrion</keyword>
<keyword id="KW-1000">Mitochondrion outer membrane</keyword>
<keyword id="KW-1185">Reference proteome</keyword>
<keyword id="KW-0808">Transferase</keyword>
<keyword id="KW-0812">Transmembrane</keyword>
<keyword id="KW-1133">Transmembrane helix</keyword>
<keyword id="KW-0833">Ubl conjugation pathway</keyword>
<keyword id="KW-0862">Zinc</keyword>
<keyword id="KW-0863">Zinc-finger</keyword>
<evidence type="ECO:0000250" key="1">
    <source>
        <dbReference type="UniProtKB" id="Q969V5"/>
    </source>
</evidence>
<evidence type="ECO:0000255" key="2"/>
<evidence type="ECO:0000255" key="3">
    <source>
        <dbReference type="PROSITE-ProRule" id="PRU00175"/>
    </source>
</evidence>
<evidence type="ECO:0000305" key="4"/>
<sequence length="341" mass="38585">MEDFPVLEMVCLGSSVALSGLFYYIYRKKRKTVDKLKEAPVMALDAKLIDLLNATPGKCLQYVVVEGTVQPVGEPLRSQFQESSVGVIQKLVLREHKLVWNSLGRIWTDSERVLLQRVNAVPFNLLGLNKSFVRVLCPLEATGPKMEIVHEKFHQATYGFTDLIGQYLSGEKPKGQLETEEMLKVGASLTVVGELILDTDRLLKIRPPTDGSEYFLSSADFETLLMEQEGQAEVWRVFACICALAGVAVLIWTGRRYYRQLKLRWEQENLRREFEGMGTGEREEDNGVENACVICLSNPRGCVLLDCGHVCCCFRCYQALPQPFCPICRQHIKRVVPLYQA</sequence>
<name>MUL1A_DANRE</name>
<protein>
    <recommendedName>
        <fullName>Mitochondrial ubiquitin ligase activator of nfkb 1-A</fullName>
        <ecNumber>2.3.2.27</ecNumber>
    </recommendedName>
    <alternativeName>
        <fullName>E3 ubiquitin-protein ligase mul1-A</fullName>
    </alternativeName>
    <alternativeName>
        <fullName evidence="4">RING-type E3 ubiquitin transferase nfkb 1-A</fullName>
    </alternativeName>
</protein>
<gene>
    <name type="primary">mul1a</name>
    <name type="synonym">mul1</name>
    <name type="ORF">zgc:92166</name>
</gene>